<protein>
    <recommendedName>
        <fullName evidence="1">Large ribosomal subunit protein uL14</fullName>
    </recommendedName>
    <alternativeName>
        <fullName evidence="2">50S ribosomal protein L14</fullName>
    </alternativeName>
</protein>
<organism>
    <name type="scientific">Campylobacter concisus (strain 13826)</name>
    <dbReference type="NCBI Taxonomy" id="360104"/>
    <lineage>
        <taxon>Bacteria</taxon>
        <taxon>Pseudomonadati</taxon>
        <taxon>Campylobacterota</taxon>
        <taxon>Epsilonproteobacteria</taxon>
        <taxon>Campylobacterales</taxon>
        <taxon>Campylobacteraceae</taxon>
        <taxon>Campylobacter</taxon>
    </lineage>
</organism>
<keyword id="KW-0687">Ribonucleoprotein</keyword>
<keyword id="KW-0689">Ribosomal protein</keyword>
<keyword id="KW-0694">RNA-binding</keyword>
<keyword id="KW-0699">rRNA-binding</keyword>
<name>RL14_CAMC1</name>
<sequence>MIQSFTRLAVADNSGAKELMCIKVLGGSKRRYATLGDIIVCSVKKALPNGKIKKGQVVKAVVVRTKREVQRDNGSLIRFDENAAVILDSKKEPVGTRIFGPVGREVRYANFMKIVSLAPEVL</sequence>
<feature type="chain" id="PRO_1000055540" description="Large ribosomal subunit protein uL14">
    <location>
        <begin position="1"/>
        <end position="122"/>
    </location>
</feature>
<comment type="function">
    <text evidence="1">Binds to 23S rRNA. Forms part of two intersubunit bridges in the 70S ribosome.</text>
</comment>
<comment type="subunit">
    <text evidence="1">Part of the 50S ribosomal subunit. Forms a cluster with proteins L3 and L19. In the 70S ribosome, L14 and L19 interact and together make contacts with the 16S rRNA in bridges B5 and B8.</text>
</comment>
<comment type="similarity">
    <text evidence="1">Belongs to the universal ribosomal protein uL14 family.</text>
</comment>
<accession>A7ZG02</accession>
<reference key="1">
    <citation type="submission" date="2007-10" db="EMBL/GenBank/DDBJ databases">
        <title>Genome sequence of Campylobacter concisus 13826 isolated from human feces.</title>
        <authorList>
            <person name="Fouts D.E."/>
            <person name="Mongodin E.F."/>
            <person name="Puiu D."/>
            <person name="Sebastian Y."/>
            <person name="Miller W.G."/>
            <person name="Mandrell R.E."/>
            <person name="On S."/>
            <person name="Nelson K.E."/>
        </authorList>
    </citation>
    <scope>NUCLEOTIDE SEQUENCE [LARGE SCALE GENOMIC DNA]</scope>
    <source>
        <strain>13826</strain>
    </source>
</reference>
<gene>
    <name evidence="1" type="primary">rplN</name>
    <name type="ordered locus">Ccon26_18750</name>
    <name type="ORF">CCC13826_1767</name>
</gene>
<proteinExistence type="inferred from homology"/>
<dbReference type="EMBL" id="CP000792">
    <property type="protein sequence ID" value="EAT98132.2"/>
    <property type="molecule type" value="Genomic_DNA"/>
</dbReference>
<dbReference type="RefSeq" id="WP_002941516.1">
    <property type="nucleotide sequence ID" value="NC_009802.2"/>
</dbReference>
<dbReference type="SMR" id="A7ZG02"/>
<dbReference type="STRING" id="360104.CCC13826_1767"/>
<dbReference type="KEGG" id="cco:CCC13826_1767"/>
<dbReference type="eggNOG" id="COG0093">
    <property type="taxonomic scope" value="Bacteria"/>
</dbReference>
<dbReference type="HOGENOM" id="CLU_095071_2_1_7"/>
<dbReference type="OrthoDB" id="9806379at2"/>
<dbReference type="Proteomes" id="UP000001121">
    <property type="component" value="Chromosome"/>
</dbReference>
<dbReference type="GO" id="GO:0022625">
    <property type="term" value="C:cytosolic large ribosomal subunit"/>
    <property type="evidence" value="ECO:0007669"/>
    <property type="project" value="TreeGrafter"/>
</dbReference>
<dbReference type="GO" id="GO:0070180">
    <property type="term" value="F:large ribosomal subunit rRNA binding"/>
    <property type="evidence" value="ECO:0007669"/>
    <property type="project" value="TreeGrafter"/>
</dbReference>
<dbReference type="GO" id="GO:0003735">
    <property type="term" value="F:structural constituent of ribosome"/>
    <property type="evidence" value="ECO:0007669"/>
    <property type="project" value="InterPro"/>
</dbReference>
<dbReference type="GO" id="GO:0006412">
    <property type="term" value="P:translation"/>
    <property type="evidence" value="ECO:0007669"/>
    <property type="project" value="UniProtKB-UniRule"/>
</dbReference>
<dbReference type="CDD" id="cd00337">
    <property type="entry name" value="Ribosomal_uL14"/>
    <property type="match status" value="1"/>
</dbReference>
<dbReference type="FunFam" id="2.40.150.20:FF:000001">
    <property type="entry name" value="50S ribosomal protein L14"/>
    <property type="match status" value="1"/>
</dbReference>
<dbReference type="Gene3D" id="2.40.150.20">
    <property type="entry name" value="Ribosomal protein L14"/>
    <property type="match status" value="1"/>
</dbReference>
<dbReference type="HAMAP" id="MF_01367">
    <property type="entry name" value="Ribosomal_uL14"/>
    <property type="match status" value="1"/>
</dbReference>
<dbReference type="InterPro" id="IPR000218">
    <property type="entry name" value="Ribosomal_uL14"/>
</dbReference>
<dbReference type="InterPro" id="IPR005745">
    <property type="entry name" value="Ribosomal_uL14_bac-type"/>
</dbReference>
<dbReference type="InterPro" id="IPR019972">
    <property type="entry name" value="Ribosomal_uL14_CS"/>
</dbReference>
<dbReference type="InterPro" id="IPR036853">
    <property type="entry name" value="Ribosomal_uL14_sf"/>
</dbReference>
<dbReference type="NCBIfam" id="TIGR01067">
    <property type="entry name" value="rplN_bact"/>
    <property type="match status" value="1"/>
</dbReference>
<dbReference type="PANTHER" id="PTHR11761">
    <property type="entry name" value="50S/60S RIBOSOMAL PROTEIN L14/L23"/>
    <property type="match status" value="1"/>
</dbReference>
<dbReference type="PANTHER" id="PTHR11761:SF3">
    <property type="entry name" value="LARGE RIBOSOMAL SUBUNIT PROTEIN UL14M"/>
    <property type="match status" value="1"/>
</dbReference>
<dbReference type="Pfam" id="PF00238">
    <property type="entry name" value="Ribosomal_L14"/>
    <property type="match status" value="1"/>
</dbReference>
<dbReference type="SMART" id="SM01374">
    <property type="entry name" value="Ribosomal_L14"/>
    <property type="match status" value="1"/>
</dbReference>
<dbReference type="SUPFAM" id="SSF50193">
    <property type="entry name" value="Ribosomal protein L14"/>
    <property type="match status" value="1"/>
</dbReference>
<dbReference type="PROSITE" id="PS00049">
    <property type="entry name" value="RIBOSOMAL_L14"/>
    <property type="match status" value="1"/>
</dbReference>
<evidence type="ECO:0000255" key="1">
    <source>
        <dbReference type="HAMAP-Rule" id="MF_01367"/>
    </source>
</evidence>
<evidence type="ECO:0000305" key="2"/>